<comment type="function">
    <text evidence="2">Catalyzes a salvage reaction resulting in the formation of AMP, that is energically less costly than de novo synthesis. May contribute to the recycling of adenine into adenylate nucleotides and the inactivation of cytokinins by phosphoribosylation. Possesses low activity toward adenine, but can efficiently convert cytokinins from free bases (active form) to the corresponding nucleotides (inactive form).</text>
</comment>
<comment type="catalytic activity">
    <reaction evidence="2">
        <text>AMP + diphosphate = 5-phospho-alpha-D-ribose 1-diphosphate + adenine</text>
        <dbReference type="Rhea" id="RHEA:16609"/>
        <dbReference type="ChEBI" id="CHEBI:16708"/>
        <dbReference type="ChEBI" id="CHEBI:33019"/>
        <dbReference type="ChEBI" id="CHEBI:58017"/>
        <dbReference type="ChEBI" id="CHEBI:456215"/>
        <dbReference type="EC" id="2.4.2.7"/>
    </reaction>
</comment>
<comment type="pathway">
    <text>Purine metabolism; AMP biosynthesis via salvage pathway; AMP from adenine: step 1/1.</text>
</comment>
<comment type="subunit">
    <text evidence="1">Homodimer.</text>
</comment>
<comment type="subcellular location">
    <subcellularLocation>
        <location evidence="3">Cytoplasm</location>
    </subcellularLocation>
</comment>
<comment type="disruption phenotype">
    <text evidence="2">No visible phenotype under normal growth conditions.</text>
</comment>
<comment type="similarity">
    <text evidence="3">Belongs to the purine/pyrimidine phosphoribosyltransferase family.</text>
</comment>
<accession>Q9LFP0</accession>
<proteinExistence type="evidence at protein level"/>
<keyword id="KW-0963">Cytoplasm</keyword>
<keyword id="KW-0328">Glycosyltransferase</keyword>
<keyword id="KW-0660">Purine salvage</keyword>
<keyword id="KW-1185">Reference proteome</keyword>
<keyword id="KW-0808">Transferase</keyword>
<organism>
    <name type="scientific">Arabidopsis thaliana</name>
    <name type="common">Mouse-ear cress</name>
    <dbReference type="NCBI Taxonomy" id="3702"/>
    <lineage>
        <taxon>Eukaryota</taxon>
        <taxon>Viridiplantae</taxon>
        <taxon>Streptophyta</taxon>
        <taxon>Embryophyta</taxon>
        <taxon>Tracheophyta</taxon>
        <taxon>Spermatophyta</taxon>
        <taxon>Magnoliopsida</taxon>
        <taxon>eudicotyledons</taxon>
        <taxon>Gunneridae</taxon>
        <taxon>Pentapetalae</taxon>
        <taxon>rosids</taxon>
        <taxon>malvids</taxon>
        <taxon>Brassicales</taxon>
        <taxon>Brassicaceae</taxon>
        <taxon>Camelineae</taxon>
        <taxon>Arabidopsis</taxon>
    </lineage>
</organism>
<reference key="1">
    <citation type="journal article" date="2000" name="Nature">
        <title>Sequence and analysis of chromosome 5 of the plant Arabidopsis thaliana.</title>
        <authorList>
            <person name="Tabata S."/>
            <person name="Kaneko T."/>
            <person name="Nakamura Y."/>
            <person name="Kotani H."/>
            <person name="Kato T."/>
            <person name="Asamizu E."/>
            <person name="Miyajima N."/>
            <person name="Sasamoto S."/>
            <person name="Kimura T."/>
            <person name="Hosouchi T."/>
            <person name="Kawashima K."/>
            <person name="Kohara M."/>
            <person name="Matsumoto M."/>
            <person name="Matsuno A."/>
            <person name="Muraki A."/>
            <person name="Nakayama S."/>
            <person name="Nakazaki N."/>
            <person name="Naruo K."/>
            <person name="Okumura S."/>
            <person name="Shinpo S."/>
            <person name="Takeuchi C."/>
            <person name="Wada T."/>
            <person name="Watanabe A."/>
            <person name="Yamada M."/>
            <person name="Yasuda M."/>
            <person name="Sato S."/>
            <person name="de la Bastide M."/>
            <person name="Huang E."/>
            <person name="Spiegel L."/>
            <person name="Gnoj L."/>
            <person name="O'Shaughnessy A."/>
            <person name="Preston R."/>
            <person name="Habermann K."/>
            <person name="Murray J."/>
            <person name="Johnson D."/>
            <person name="Rohlfing T."/>
            <person name="Nelson J."/>
            <person name="Stoneking T."/>
            <person name="Pepin K."/>
            <person name="Spieth J."/>
            <person name="Sekhon M."/>
            <person name="Armstrong J."/>
            <person name="Becker M."/>
            <person name="Belter E."/>
            <person name="Cordum H."/>
            <person name="Cordes M."/>
            <person name="Courtney L."/>
            <person name="Courtney W."/>
            <person name="Dante M."/>
            <person name="Du H."/>
            <person name="Edwards J."/>
            <person name="Fryman J."/>
            <person name="Haakensen B."/>
            <person name="Lamar E."/>
            <person name="Latreille P."/>
            <person name="Leonard S."/>
            <person name="Meyer R."/>
            <person name="Mulvaney E."/>
            <person name="Ozersky P."/>
            <person name="Riley A."/>
            <person name="Strowmatt C."/>
            <person name="Wagner-McPherson C."/>
            <person name="Wollam A."/>
            <person name="Yoakum M."/>
            <person name="Bell M."/>
            <person name="Dedhia N."/>
            <person name="Parnell L."/>
            <person name="Shah R."/>
            <person name="Rodriguez M."/>
            <person name="Hoon See L."/>
            <person name="Vil D."/>
            <person name="Baker J."/>
            <person name="Kirchoff K."/>
            <person name="Toth K."/>
            <person name="King L."/>
            <person name="Bahret A."/>
            <person name="Miller B."/>
            <person name="Marra M.A."/>
            <person name="Martienssen R."/>
            <person name="McCombie W.R."/>
            <person name="Wilson R.K."/>
            <person name="Murphy G."/>
            <person name="Bancroft I."/>
            <person name="Volckaert G."/>
            <person name="Wambutt R."/>
            <person name="Duesterhoeft A."/>
            <person name="Stiekema W."/>
            <person name="Pohl T."/>
            <person name="Entian K.-D."/>
            <person name="Terryn N."/>
            <person name="Hartley N."/>
            <person name="Bent E."/>
            <person name="Johnson S."/>
            <person name="Langham S.-A."/>
            <person name="McCullagh B."/>
            <person name="Robben J."/>
            <person name="Grymonprez B."/>
            <person name="Zimmermann W."/>
            <person name="Ramsperger U."/>
            <person name="Wedler H."/>
            <person name="Balke K."/>
            <person name="Wedler E."/>
            <person name="Peters S."/>
            <person name="van Staveren M."/>
            <person name="Dirkse W."/>
            <person name="Mooijman P."/>
            <person name="Klein Lankhorst R."/>
            <person name="Weitzenegger T."/>
            <person name="Bothe G."/>
            <person name="Rose M."/>
            <person name="Hauf J."/>
            <person name="Berneiser S."/>
            <person name="Hempel S."/>
            <person name="Feldpausch M."/>
            <person name="Lamberth S."/>
            <person name="Villarroel R."/>
            <person name="Gielen J."/>
            <person name="Ardiles W."/>
            <person name="Bents O."/>
            <person name="Lemcke K."/>
            <person name="Kolesov G."/>
            <person name="Mayer K.F.X."/>
            <person name="Rudd S."/>
            <person name="Schoof H."/>
            <person name="Schueller C."/>
            <person name="Zaccaria P."/>
            <person name="Mewes H.-W."/>
            <person name="Bevan M."/>
            <person name="Fransz P.F."/>
        </authorList>
    </citation>
    <scope>NUCLEOTIDE SEQUENCE [LARGE SCALE GENOMIC DNA]</scope>
    <source>
        <strain>cv. Columbia</strain>
    </source>
</reference>
<reference key="2">
    <citation type="journal article" date="2017" name="Plant J.">
        <title>Araport11: a complete reannotation of the Arabidopsis thaliana reference genome.</title>
        <authorList>
            <person name="Cheng C.Y."/>
            <person name="Krishnakumar V."/>
            <person name="Chan A.P."/>
            <person name="Thibaud-Nissen F."/>
            <person name="Schobel S."/>
            <person name="Town C.D."/>
        </authorList>
    </citation>
    <scope>GENOME REANNOTATION</scope>
    <source>
        <strain>cv. Columbia</strain>
    </source>
</reference>
<reference key="3">
    <citation type="journal article" date="2003" name="Science">
        <title>Empirical analysis of transcriptional activity in the Arabidopsis genome.</title>
        <authorList>
            <person name="Yamada K."/>
            <person name="Lim J."/>
            <person name="Dale J.M."/>
            <person name="Chen H."/>
            <person name="Shinn P."/>
            <person name="Palm C.J."/>
            <person name="Southwick A.M."/>
            <person name="Wu H.C."/>
            <person name="Kim C.J."/>
            <person name="Nguyen M."/>
            <person name="Pham P.K."/>
            <person name="Cheuk R.F."/>
            <person name="Karlin-Newmann G."/>
            <person name="Liu S.X."/>
            <person name="Lam B."/>
            <person name="Sakano H."/>
            <person name="Wu T."/>
            <person name="Yu G."/>
            <person name="Miranda M."/>
            <person name="Quach H.L."/>
            <person name="Tripp M."/>
            <person name="Chang C.H."/>
            <person name="Lee J.M."/>
            <person name="Toriumi M.J."/>
            <person name="Chan M.M."/>
            <person name="Tang C.C."/>
            <person name="Onodera C.S."/>
            <person name="Deng J.M."/>
            <person name="Akiyama K."/>
            <person name="Ansari Y."/>
            <person name="Arakawa T."/>
            <person name="Banh J."/>
            <person name="Banno F."/>
            <person name="Bowser L."/>
            <person name="Brooks S.Y."/>
            <person name="Carninci P."/>
            <person name="Chao Q."/>
            <person name="Choy N."/>
            <person name="Enju A."/>
            <person name="Goldsmith A.D."/>
            <person name="Gurjal M."/>
            <person name="Hansen N.F."/>
            <person name="Hayashizaki Y."/>
            <person name="Johnson-Hopson C."/>
            <person name="Hsuan V.W."/>
            <person name="Iida K."/>
            <person name="Karnes M."/>
            <person name="Khan S."/>
            <person name="Koesema E."/>
            <person name="Ishida J."/>
            <person name="Jiang P.X."/>
            <person name="Jones T."/>
            <person name="Kawai J."/>
            <person name="Kamiya A."/>
            <person name="Meyers C."/>
            <person name="Nakajima M."/>
            <person name="Narusaka M."/>
            <person name="Seki M."/>
            <person name="Sakurai T."/>
            <person name="Satou M."/>
            <person name="Tamse R."/>
            <person name="Vaysberg M."/>
            <person name="Wallender E.K."/>
            <person name="Wong C."/>
            <person name="Yamamura Y."/>
            <person name="Yuan S."/>
            <person name="Shinozaki K."/>
            <person name="Davis R.W."/>
            <person name="Theologis A."/>
            <person name="Ecker J.R."/>
        </authorList>
    </citation>
    <scope>NUCLEOTIDE SEQUENCE [LARGE SCALE MRNA]</scope>
    <source>
        <strain>cv. Columbia</strain>
    </source>
</reference>
<reference key="4">
    <citation type="journal article" date="2013" name="Mol. Plant">
        <title>Adenine phosphoribosyl transferase 1 is a key enzyme catalyzing cytokinin conversion from nucleobases to nucleotides in Arabidopsis.</title>
        <authorList>
            <person name="Zhang X."/>
            <person name="Chen Y."/>
            <person name="Lin X."/>
            <person name="Hong X."/>
            <person name="Zhu Y."/>
            <person name="Li W."/>
            <person name="He W."/>
            <person name="An F."/>
            <person name="Guo H."/>
        </authorList>
    </citation>
    <scope>FUNCTION</scope>
    <scope>CATALYTIC ACTIVITY</scope>
    <scope>DISRUPTION PHENOTYPE</scope>
</reference>
<gene>
    <name type="primary">APT5</name>
    <name type="ordered locus">At5g11160</name>
    <name type="ORF">F2I11.50</name>
</gene>
<dbReference type="EC" id="2.4.2.7"/>
<dbReference type="EMBL" id="AL360314">
    <property type="protein sequence ID" value="CAB96651.1"/>
    <property type="molecule type" value="Genomic_DNA"/>
</dbReference>
<dbReference type="EMBL" id="CP002688">
    <property type="protein sequence ID" value="AED91640.1"/>
    <property type="molecule type" value="Genomic_DNA"/>
</dbReference>
<dbReference type="EMBL" id="BT004028">
    <property type="protein sequence ID" value="AAO42064.1"/>
    <property type="molecule type" value="mRNA"/>
</dbReference>
<dbReference type="EMBL" id="BT005077">
    <property type="protein sequence ID" value="AAO50610.1"/>
    <property type="molecule type" value="mRNA"/>
</dbReference>
<dbReference type="RefSeq" id="NP_196677.1">
    <property type="nucleotide sequence ID" value="NM_121154.4"/>
</dbReference>
<dbReference type="SMR" id="Q9LFP0"/>
<dbReference type="BioGRID" id="16263">
    <property type="interactions" value="3"/>
</dbReference>
<dbReference type="FunCoup" id="Q9LFP0">
    <property type="interactions" value="1975"/>
</dbReference>
<dbReference type="IntAct" id="Q9LFP0">
    <property type="interactions" value="3"/>
</dbReference>
<dbReference type="STRING" id="3702.Q9LFP0"/>
<dbReference type="PaxDb" id="3702-AT5G11160.1"/>
<dbReference type="ProteomicsDB" id="240610"/>
<dbReference type="EnsemblPlants" id="AT5G11160.1">
    <property type="protein sequence ID" value="AT5G11160.1"/>
    <property type="gene ID" value="AT5G11160"/>
</dbReference>
<dbReference type="GeneID" id="830985"/>
<dbReference type="Gramene" id="AT5G11160.1">
    <property type="protein sequence ID" value="AT5G11160.1"/>
    <property type="gene ID" value="AT5G11160"/>
</dbReference>
<dbReference type="KEGG" id="ath:AT5G11160"/>
<dbReference type="Araport" id="AT5G11160"/>
<dbReference type="TAIR" id="AT5G11160">
    <property type="gene designation" value="APT5"/>
</dbReference>
<dbReference type="eggNOG" id="KOG1712">
    <property type="taxonomic scope" value="Eukaryota"/>
</dbReference>
<dbReference type="HOGENOM" id="CLU_063339_0_3_1"/>
<dbReference type="InParanoid" id="Q9LFP0"/>
<dbReference type="OMA" id="NWIGIGE"/>
<dbReference type="OrthoDB" id="363185at2759"/>
<dbReference type="PhylomeDB" id="Q9LFP0"/>
<dbReference type="BioCyc" id="ARA:AT5G11160-MONOMER"/>
<dbReference type="BRENDA" id="2.4.2.7">
    <property type="organism ID" value="399"/>
</dbReference>
<dbReference type="UniPathway" id="UPA00588">
    <property type="reaction ID" value="UER00646"/>
</dbReference>
<dbReference type="PRO" id="PR:Q9LFP0"/>
<dbReference type="Proteomes" id="UP000006548">
    <property type="component" value="Chromosome 5"/>
</dbReference>
<dbReference type="ExpressionAtlas" id="Q9LFP0">
    <property type="expression patterns" value="baseline and differential"/>
</dbReference>
<dbReference type="GO" id="GO:0005737">
    <property type="term" value="C:cytoplasm"/>
    <property type="evidence" value="ECO:0007669"/>
    <property type="project" value="UniProtKB-SubCell"/>
</dbReference>
<dbReference type="GO" id="GO:0003999">
    <property type="term" value="F:adenine phosphoribosyltransferase activity"/>
    <property type="evidence" value="ECO:0000314"/>
    <property type="project" value="UniProtKB"/>
</dbReference>
<dbReference type="GO" id="GO:0006168">
    <property type="term" value="P:adenine salvage"/>
    <property type="evidence" value="ECO:0007669"/>
    <property type="project" value="InterPro"/>
</dbReference>
<dbReference type="GO" id="GO:0044209">
    <property type="term" value="P:AMP salvage"/>
    <property type="evidence" value="ECO:0007669"/>
    <property type="project" value="UniProtKB-UniPathway"/>
</dbReference>
<dbReference type="GO" id="GO:0006166">
    <property type="term" value="P:purine ribonucleoside salvage"/>
    <property type="evidence" value="ECO:0007669"/>
    <property type="project" value="UniProtKB-KW"/>
</dbReference>
<dbReference type="CDD" id="cd06223">
    <property type="entry name" value="PRTases_typeI"/>
    <property type="match status" value="1"/>
</dbReference>
<dbReference type="FunFam" id="3.40.50.2020:FF:000022">
    <property type="entry name" value="Adenine phosphoribosyltransferase 1"/>
    <property type="match status" value="1"/>
</dbReference>
<dbReference type="Gene3D" id="3.40.50.2020">
    <property type="match status" value="1"/>
</dbReference>
<dbReference type="HAMAP" id="MF_00004">
    <property type="entry name" value="Aden_phosphoribosyltr"/>
    <property type="match status" value="1"/>
</dbReference>
<dbReference type="InterPro" id="IPR005764">
    <property type="entry name" value="Ade_phspho_trans"/>
</dbReference>
<dbReference type="InterPro" id="IPR050120">
    <property type="entry name" value="Adenine_PRTase"/>
</dbReference>
<dbReference type="InterPro" id="IPR000836">
    <property type="entry name" value="PRibTrfase_dom"/>
</dbReference>
<dbReference type="InterPro" id="IPR029057">
    <property type="entry name" value="PRTase-like"/>
</dbReference>
<dbReference type="NCBIfam" id="TIGR01090">
    <property type="entry name" value="apt"/>
    <property type="match status" value="1"/>
</dbReference>
<dbReference type="NCBIfam" id="NF002634">
    <property type="entry name" value="PRK02304.1-3"/>
    <property type="match status" value="1"/>
</dbReference>
<dbReference type="NCBIfam" id="NF002636">
    <property type="entry name" value="PRK02304.1-5"/>
    <property type="match status" value="1"/>
</dbReference>
<dbReference type="PANTHER" id="PTHR11776">
    <property type="entry name" value="ADENINE PHOSPHORIBOSYLTRANSFERASE"/>
    <property type="match status" value="1"/>
</dbReference>
<dbReference type="PANTHER" id="PTHR11776:SF22">
    <property type="entry name" value="ADENINE PHOSPHORIBOSYLTRANSFERASE 5"/>
    <property type="match status" value="1"/>
</dbReference>
<dbReference type="Pfam" id="PF00156">
    <property type="entry name" value="Pribosyltran"/>
    <property type="match status" value="1"/>
</dbReference>
<dbReference type="SUPFAM" id="SSF53271">
    <property type="entry name" value="PRTase-like"/>
    <property type="match status" value="1"/>
</dbReference>
<dbReference type="PROSITE" id="PS00103">
    <property type="entry name" value="PUR_PYR_PR_TRANSFER"/>
    <property type="match status" value="1"/>
</dbReference>
<evidence type="ECO:0000250" key="1"/>
<evidence type="ECO:0000269" key="2">
    <source>
    </source>
</evidence>
<evidence type="ECO:0000305" key="3"/>
<sequence>MFAAENGLKGDPRLEAISAAIRVVPNFPKKGIMFQDITTLLLDHKAFKHTIDIFVDRYKDMQISVVAGVEARGFLFGPSIALAIGAKFIPLRKPGKLPGKVISESYELEYGHDRLEMHVGAVEPRERVIIIDDLVATGGTLSAAMSLLESQGAEVVECACVIGLPEVKGQHKLKGKPLYVLVEPSGLDEFC</sequence>
<name>APT5_ARATH</name>
<feature type="chain" id="PRO_0000430132" description="Adenine phosphoribosyltransferase 5">
    <location>
        <begin position="1"/>
        <end position="191"/>
    </location>
</feature>
<protein>
    <recommendedName>
        <fullName>Adenine phosphoribosyltransferase 5</fullName>
        <shortName>AtAPT5</shortName>
        <ecNumber>2.4.2.7</ecNumber>
    </recommendedName>
</protein>